<accession>Q6GBK6</accession>
<protein>
    <recommendedName>
        <fullName>Putative antiporter subunit mnhB2</fullName>
    </recommendedName>
    <alternativeName>
        <fullName>Mrp complex subunit B2</fullName>
    </alternativeName>
    <alternativeName>
        <fullName>Putative NADH-ubiquinone oxidoreductase subunit mnhB2</fullName>
    </alternativeName>
</protein>
<gene>
    <name type="primary">mnhB2</name>
    <name type="synonym">mrpB2</name>
    <name type="ordered locus">SAS0590</name>
</gene>
<keyword id="KW-0050">Antiport</keyword>
<keyword id="KW-1003">Cell membrane</keyword>
<keyword id="KW-0406">Ion transport</keyword>
<keyword id="KW-0472">Membrane</keyword>
<keyword id="KW-0812">Transmembrane</keyword>
<keyword id="KW-1133">Transmembrane helix</keyword>
<keyword id="KW-0813">Transport</keyword>
<feature type="chain" id="PRO_0000372272" description="Putative antiporter subunit mnhB2">
    <location>
        <begin position="1"/>
        <end position="141"/>
    </location>
</feature>
<feature type="transmembrane region" description="Helical" evidence="2">
    <location>
        <begin position="10"/>
        <end position="30"/>
    </location>
</feature>
<feature type="transmembrane region" description="Helical" evidence="2">
    <location>
        <begin position="35"/>
        <end position="55"/>
    </location>
</feature>
<feature type="transmembrane region" description="Helical" evidence="2">
    <location>
        <begin position="70"/>
        <end position="90"/>
    </location>
</feature>
<feature type="transmembrane region" description="Helical" evidence="2">
    <location>
        <begin position="114"/>
        <end position="134"/>
    </location>
</feature>
<reference key="1">
    <citation type="journal article" date="2004" name="Proc. Natl. Acad. Sci. U.S.A.">
        <title>Complete genomes of two clinical Staphylococcus aureus strains: evidence for the rapid evolution of virulence and drug resistance.</title>
        <authorList>
            <person name="Holden M.T.G."/>
            <person name="Feil E.J."/>
            <person name="Lindsay J.A."/>
            <person name="Peacock S.J."/>
            <person name="Day N.P.J."/>
            <person name="Enright M.C."/>
            <person name="Foster T.J."/>
            <person name="Moore C.E."/>
            <person name="Hurst L."/>
            <person name="Atkin R."/>
            <person name="Barron A."/>
            <person name="Bason N."/>
            <person name="Bentley S.D."/>
            <person name="Chillingworth C."/>
            <person name="Chillingworth T."/>
            <person name="Churcher C."/>
            <person name="Clark L."/>
            <person name="Corton C."/>
            <person name="Cronin A."/>
            <person name="Doggett J."/>
            <person name="Dowd L."/>
            <person name="Feltwell T."/>
            <person name="Hance Z."/>
            <person name="Harris B."/>
            <person name="Hauser H."/>
            <person name="Holroyd S."/>
            <person name="Jagels K."/>
            <person name="James K.D."/>
            <person name="Lennard N."/>
            <person name="Line A."/>
            <person name="Mayes R."/>
            <person name="Moule S."/>
            <person name="Mungall K."/>
            <person name="Ormond D."/>
            <person name="Quail M.A."/>
            <person name="Rabbinowitsch E."/>
            <person name="Rutherford K.M."/>
            <person name="Sanders M."/>
            <person name="Sharp S."/>
            <person name="Simmonds M."/>
            <person name="Stevens K."/>
            <person name="Whitehead S."/>
            <person name="Barrell B.G."/>
            <person name="Spratt B.G."/>
            <person name="Parkhill J."/>
        </authorList>
    </citation>
    <scope>NUCLEOTIDE SEQUENCE [LARGE SCALE GENOMIC DNA]</scope>
    <source>
        <strain>MSSA476</strain>
    </source>
</reference>
<comment type="subunit">
    <text evidence="1">May form a heterooligomeric complex that consists of seven subunits: mnhA2, mnhB2, mnhC2, mnhD2, mnhE2, mnhF2 and mnhG2.</text>
</comment>
<comment type="subcellular location">
    <subcellularLocation>
        <location evidence="3">Cell membrane</location>
        <topology evidence="3">Multi-pass membrane protein</topology>
    </subcellularLocation>
</comment>
<comment type="similarity">
    <text evidence="3">Belongs to the CPA3 antiporters (TC 2.A.63) subunit B family.</text>
</comment>
<proteinExistence type="inferred from homology"/>
<dbReference type="EMBL" id="BX571857">
    <property type="protein sequence ID" value="CAG42365.1"/>
    <property type="molecule type" value="Genomic_DNA"/>
</dbReference>
<dbReference type="RefSeq" id="WP_000661906.1">
    <property type="nucleotide sequence ID" value="NC_002953.3"/>
</dbReference>
<dbReference type="SMR" id="Q6GBK6"/>
<dbReference type="KEGG" id="sas:SAS0590"/>
<dbReference type="HOGENOM" id="CLU_101659_1_1_9"/>
<dbReference type="GO" id="GO:0005886">
    <property type="term" value="C:plasma membrane"/>
    <property type="evidence" value="ECO:0007669"/>
    <property type="project" value="UniProtKB-SubCell"/>
</dbReference>
<dbReference type="GO" id="GO:0015297">
    <property type="term" value="F:antiporter activity"/>
    <property type="evidence" value="ECO:0007669"/>
    <property type="project" value="UniProtKB-KW"/>
</dbReference>
<dbReference type="GO" id="GO:0006811">
    <property type="term" value="P:monoatomic ion transport"/>
    <property type="evidence" value="ECO:0007669"/>
    <property type="project" value="UniProtKB-KW"/>
</dbReference>
<dbReference type="InterPro" id="IPR050622">
    <property type="entry name" value="CPA3_antiporter_subunitB"/>
</dbReference>
<dbReference type="InterPro" id="IPR007182">
    <property type="entry name" value="MnhB"/>
</dbReference>
<dbReference type="NCBIfam" id="NF009223">
    <property type="entry name" value="PRK12573.1"/>
    <property type="match status" value="1"/>
</dbReference>
<dbReference type="NCBIfam" id="NF009224">
    <property type="entry name" value="PRK12574.1"/>
    <property type="match status" value="1"/>
</dbReference>
<dbReference type="PANTHER" id="PTHR33932">
    <property type="entry name" value="NA(+)/H(+) ANTIPORTER SUBUNIT B"/>
    <property type="match status" value="1"/>
</dbReference>
<dbReference type="PANTHER" id="PTHR33932:SF4">
    <property type="entry name" value="NA(+)_H(+) ANTIPORTER SUBUNIT B"/>
    <property type="match status" value="1"/>
</dbReference>
<dbReference type="Pfam" id="PF04039">
    <property type="entry name" value="MnhB"/>
    <property type="match status" value="1"/>
</dbReference>
<evidence type="ECO:0000250" key="1"/>
<evidence type="ECO:0000255" key="2"/>
<evidence type="ECO:0000305" key="3"/>
<organism>
    <name type="scientific">Staphylococcus aureus (strain MSSA476)</name>
    <dbReference type="NCBI Taxonomy" id="282459"/>
    <lineage>
        <taxon>Bacteria</taxon>
        <taxon>Bacillati</taxon>
        <taxon>Bacillota</taxon>
        <taxon>Bacilli</taxon>
        <taxon>Bacillales</taxon>
        <taxon>Staphylococcaceae</taxon>
        <taxon>Staphylococcus</taxon>
    </lineage>
</organism>
<sequence length="141" mass="15455">MKENDVVLRTVTKLVVFILLTFGFYVFFAGHNNPGGGFIGGLIFSSAFILMFLAFNVEEVLESLPIDFRILMIIGALVSSITAIIPMFFGKPFLSQYETTWILPILGQIHVSTITLFELGILFSVVGVIVTVMLSLSGGRS</sequence>
<name>MNHB2_STAAS</name>